<feature type="chain" id="PRO_1000116039" description="Ferrochelatase">
    <location>
        <begin position="1"/>
        <end position="354"/>
    </location>
</feature>
<feature type="binding site" evidence="1">
    <location>
        <position position="204"/>
    </location>
    <ligand>
        <name>Fe cation</name>
        <dbReference type="ChEBI" id="CHEBI:24875"/>
    </ligand>
</feature>
<feature type="binding site" evidence="1">
    <location>
        <position position="306"/>
    </location>
    <ligand>
        <name>Fe cation</name>
        <dbReference type="ChEBI" id="CHEBI:24875"/>
    </ligand>
</feature>
<proteinExistence type="inferred from homology"/>
<comment type="function">
    <text evidence="1">Catalyzes the ferrous insertion into protoporphyrin IX.</text>
</comment>
<comment type="catalytic activity">
    <reaction evidence="1">
        <text>heme b + 2 H(+) = protoporphyrin IX + Fe(2+)</text>
        <dbReference type="Rhea" id="RHEA:22584"/>
        <dbReference type="ChEBI" id="CHEBI:15378"/>
        <dbReference type="ChEBI" id="CHEBI:29033"/>
        <dbReference type="ChEBI" id="CHEBI:57306"/>
        <dbReference type="ChEBI" id="CHEBI:60344"/>
        <dbReference type="EC" id="4.98.1.1"/>
    </reaction>
</comment>
<comment type="pathway">
    <text evidence="1">Porphyrin-containing compound metabolism; protoheme biosynthesis; protoheme from protoporphyrin-IX: step 1/1.</text>
</comment>
<comment type="subcellular location">
    <subcellularLocation>
        <location evidence="1">Cytoplasm</location>
    </subcellularLocation>
</comment>
<comment type="similarity">
    <text evidence="1">Belongs to the ferrochelatase family.</text>
</comment>
<protein>
    <recommendedName>
        <fullName evidence="1">Ferrochelatase</fullName>
        <ecNumber evidence="1">4.98.1.1</ecNumber>
    </recommendedName>
    <alternativeName>
        <fullName evidence="1">Heme synthase</fullName>
    </alternativeName>
    <alternativeName>
        <fullName evidence="1">Protoheme ferro-lyase</fullName>
    </alternativeName>
</protein>
<name>HEMH_COXB2</name>
<accession>B6J386</accession>
<dbReference type="EC" id="4.98.1.1" evidence="1"/>
<dbReference type="EMBL" id="CP001019">
    <property type="protein sequence ID" value="ACJ19211.1"/>
    <property type="molecule type" value="Genomic_DNA"/>
</dbReference>
<dbReference type="SMR" id="B6J386"/>
<dbReference type="KEGG" id="cbg:CbuG_1969"/>
<dbReference type="HOGENOM" id="CLU_018884_0_1_6"/>
<dbReference type="UniPathway" id="UPA00252">
    <property type="reaction ID" value="UER00325"/>
</dbReference>
<dbReference type="GO" id="GO:0005737">
    <property type="term" value="C:cytoplasm"/>
    <property type="evidence" value="ECO:0007669"/>
    <property type="project" value="UniProtKB-SubCell"/>
</dbReference>
<dbReference type="GO" id="GO:0004325">
    <property type="term" value="F:ferrochelatase activity"/>
    <property type="evidence" value="ECO:0007669"/>
    <property type="project" value="UniProtKB-UniRule"/>
</dbReference>
<dbReference type="GO" id="GO:0046872">
    <property type="term" value="F:metal ion binding"/>
    <property type="evidence" value="ECO:0007669"/>
    <property type="project" value="UniProtKB-KW"/>
</dbReference>
<dbReference type="GO" id="GO:0006783">
    <property type="term" value="P:heme biosynthetic process"/>
    <property type="evidence" value="ECO:0007669"/>
    <property type="project" value="UniProtKB-UniRule"/>
</dbReference>
<dbReference type="CDD" id="cd00419">
    <property type="entry name" value="Ferrochelatase_C"/>
    <property type="match status" value="1"/>
</dbReference>
<dbReference type="CDD" id="cd03411">
    <property type="entry name" value="Ferrochelatase_N"/>
    <property type="match status" value="1"/>
</dbReference>
<dbReference type="Gene3D" id="3.40.50.1400">
    <property type="match status" value="2"/>
</dbReference>
<dbReference type="HAMAP" id="MF_00323">
    <property type="entry name" value="Ferrochelatase"/>
    <property type="match status" value="1"/>
</dbReference>
<dbReference type="InterPro" id="IPR001015">
    <property type="entry name" value="Ferrochelatase"/>
</dbReference>
<dbReference type="InterPro" id="IPR019772">
    <property type="entry name" value="Ferrochelatase_AS"/>
</dbReference>
<dbReference type="InterPro" id="IPR033644">
    <property type="entry name" value="Ferrochelatase_C"/>
</dbReference>
<dbReference type="InterPro" id="IPR033659">
    <property type="entry name" value="Ferrochelatase_N"/>
</dbReference>
<dbReference type="NCBIfam" id="TIGR00109">
    <property type="entry name" value="hemH"/>
    <property type="match status" value="1"/>
</dbReference>
<dbReference type="PANTHER" id="PTHR11108">
    <property type="entry name" value="FERROCHELATASE"/>
    <property type="match status" value="1"/>
</dbReference>
<dbReference type="PANTHER" id="PTHR11108:SF1">
    <property type="entry name" value="FERROCHELATASE, MITOCHONDRIAL"/>
    <property type="match status" value="1"/>
</dbReference>
<dbReference type="Pfam" id="PF00762">
    <property type="entry name" value="Ferrochelatase"/>
    <property type="match status" value="1"/>
</dbReference>
<dbReference type="SUPFAM" id="SSF53800">
    <property type="entry name" value="Chelatase"/>
    <property type="match status" value="1"/>
</dbReference>
<dbReference type="PROSITE" id="PS00534">
    <property type="entry name" value="FERROCHELATASE"/>
    <property type="match status" value="1"/>
</dbReference>
<organism>
    <name type="scientific">Coxiella burnetii (strain CbuG_Q212)</name>
    <name type="common">Coxiella burnetii (strain Q212)</name>
    <dbReference type="NCBI Taxonomy" id="434923"/>
    <lineage>
        <taxon>Bacteria</taxon>
        <taxon>Pseudomonadati</taxon>
        <taxon>Pseudomonadota</taxon>
        <taxon>Gammaproteobacteria</taxon>
        <taxon>Legionellales</taxon>
        <taxon>Coxiellaceae</taxon>
        <taxon>Coxiella</taxon>
    </lineage>
</organism>
<sequence length="354" mass="40424">MAKQAIKRAKILAVKNNNKIGVLLINLGTPDEPSVPAVRRYLRQFLSDPKVIDVPSLVRWIIVHLCILPFRPKRSAKLYQKIWMPEGSPLLVYSEMLRERVGETLGDDFCVALGMRYGKPSIETALKKLQEAQCRQLIVLPLFPQYSTSTTASALEGVRAKNSFKEMTVIDRFFEEPHYIDSMTTLIHENLNEFQPDYFLFSYHGLPERHLVKSGCQLAICNRKNNCSPISSSNENCYRAQCFETSRLIAKKLNLTDQQYGVAFQSRLGRAKWIEPYTDKYLIELSKKGIKKLMVVCPSFPVDCLETLEEIGIRAQSQWQRLGGETLKLIPSLNAHPQWVNAIAKMAKKSLQLF</sequence>
<keyword id="KW-0963">Cytoplasm</keyword>
<keyword id="KW-0350">Heme biosynthesis</keyword>
<keyword id="KW-0408">Iron</keyword>
<keyword id="KW-0456">Lyase</keyword>
<keyword id="KW-0479">Metal-binding</keyword>
<keyword id="KW-0627">Porphyrin biosynthesis</keyword>
<reference key="1">
    <citation type="journal article" date="2009" name="Infect. Immun.">
        <title>Comparative genomics reveal extensive transposon-mediated genomic plasticity and diversity among potential effector proteins within the genus Coxiella.</title>
        <authorList>
            <person name="Beare P.A."/>
            <person name="Unsworth N."/>
            <person name="Andoh M."/>
            <person name="Voth D.E."/>
            <person name="Omsland A."/>
            <person name="Gilk S.D."/>
            <person name="Williams K.P."/>
            <person name="Sobral B.W."/>
            <person name="Kupko J.J. III"/>
            <person name="Porcella S.F."/>
            <person name="Samuel J.E."/>
            <person name="Heinzen R.A."/>
        </authorList>
    </citation>
    <scope>NUCLEOTIDE SEQUENCE [LARGE SCALE GENOMIC DNA]</scope>
    <source>
        <strain>CbuG_Q212</strain>
    </source>
</reference>
<evidence type="ECO:0000255" key="1">
    <source>
        <dbReference type="HAMAP-Rule" id="MF_00323"/>
    </source>
</evidence>
<gene>
    <name evidence="1" type="primary">hemH</name>
    <name type="ordered locus">CbuG_1969</name>
</gene>